<keyword id="KW-0687">Ribonucleoprotein</keyword>
<keyword id="KW-0689">Ribosomal protein</keyword>
<comment type="similarity">
    <text evidence="1">Belongs to the bacterial ribosomal protein bL33 family.</text>
</comment>
<name>RL33_CORGB</name>
<sequence>MARNDIRPIIKLKSTAGTGYTYVTRKNKRNNPDRISLMKYDPVVRKHVEFREER</sequence>
<protein>
    <recommendedName>
        <fullName evidence="1">Large ribosomal subunit protein bL33</fullName>
    </recommendedName>
    <alternativeName>
        <fullName evidence="2">50S ribosomal protein L33</fullName>
    </alternativeName>
</protein>
<gene>
    <name evidence="1" type="primary">rpmG</name>
    <name type="ordered locus">cgR_0982</name>
</gene>
<organism>
    <name type="scientific">Corynebacterium glutamicum (strain R)</name>
    <dbReference type="NCBI Taxonomy" id="340322"/>
    <lineage>
        <taxon>Bacteria</taxon>
        <taxon>Bacillati</taxon>
        <taxon>Actinomycetota</taxon>
        <taxon>Actinomycetes</taxon>
        <taxon>Mycobacteriales</taxon>
        <taxon>Corynebacteriaceae</taxon>
        <taxon>Corynebacterium</taxon>
    </lineage>
</organism>
<feature type="chain" id="PRO_1000004160" description="Large ribosomal subunit protein bL33">
    <location>
        <begin position="1"/>
        <end position="54"/>
    </location>
</feature>
<dbReference type="EMBL" id="AP009044">
    <property type="protein sequence ID" value="BAF53957.1"/>
    <property type="molecule type" value="Genomic_DNA"/>
</dbReference>
<dbReference type="RefSeq" id="WP_003858439.1">
    <property type="nucleotide sequence ID" value="NC_009342.1"/>
</dbReference>
<dbReference type="SMR" id="A4QCL0"/>
<dbReference type="GeneID" id="75007445"/>
<dbReference type="GeneID" id="93974988"/>
<dbReference type="KEGG" id="cgt:cgR_0982"/>
<dbReference type="HOGENOM" id="CLU_190949_1_1_11"/>
<dbReference type="PhylomeDB" id="A4QCL0"/>
<dbReference type="Proteomes" id="UP000006698">
    <property type="component" value="Chromosome"/>
</dbReference>
<dbReference type="GO" id="GO:0022625">
    <property type="term" value="C:cytosolic large ribosomal subunit"/>
    <property type="evidence" value="ECO:0007669"/>
    <property type="project" value="TreeGrafter"/>
</dbReference>
<dbReference type="GO" id="GO:0003735">
    <property type="term" value="F:structural constituent of ribosome"/>
    <property type="evidence" value="ECO:0007669"/>
    <property type="project" value="InterPro"/>
</dbReference>
<dbReference type="GO" id="GO:0006412">
    <property type="term" value="P:translation"/>
    <property type="evidence" value="ECO:0007669"/>
    <property type="project" value="UniProtKB-UniRule"/>
</dbReference>
<dbReference type="FunFam" id="2.20.28.120:FF:000002">
    <property type="entry name" value="50S ribosomal protein L33"/>
    <property type="match status" value="1"/>
</dbReference>
<dbReference type="Gene3D" id="2.20.28.120">
    <property type="entry name" value="Ribosomal protein L33"/>
    <property type="match status" value="1"/>
</dbReference>
<dbReference type="HAMAP" id="MF_00294">
    <property type="entry name" value="Ribosomal_bL33"/>
    <property type="match status" value="1"/>
</dbReference>
<dbReference type="InterPro" id="IPR001705">
    <property type="entry name" value="Ribosomal_bL33"/>
</dbReference>
<dbReference type="InterPro" id="IPR018264">
    <property type="entry name" value="Ribosomal_bL33_CS"/>
</dbReference>
<dbReference type="InterPro" id="IPR038584">
    <property type="entry name" value="Ribosomal_bL33_sf"/>
</dbReference>
<dbReference type="InterPro" id="IPR011332">
    <property type="entry name" value="Ribosomal_zn-bd"/>
</dbReference>
<dbReference type="NCBIfam" id="NF001860">
    <property type="entry name" value="PRK00595.1"/>
    <property type="match status" value="1"/>
</dbReference>
<dbReference type="NCBIfam" id="TIGR01023">
    <property type="entry name" value="rpmG_bact"/>
    <property type="match status" value="1"/>
</dbReference>
<dbReference type="PANTHER" id="PTHR15238">
    <property type="entry name" value="54S RIBOSOMAL PROTEIN L39, MITOCHONDRIAL"/>
    <property type="match status" value="1"/>
</dbReference>
<dbReference type="PANTHER" id="PTHR15238:SF1">
    <property type="entry name" value="LARGE RIBOSOMAL SUBUNIT PROTEIN BL33M"/>
    <property type="match status" value="1"/>
</dbReference>
<dbReference type="Pfam" id="PF00471">
    <property type="entry name" value="Ribosomal_L33"/>
    <property type="match status" value="1"/>
</dbReference>
<dbReference type="SUPFAM" id="SSF57829">
    <property type="entry name" value="Zn-binding ribosomal proteins"/>
    <property type="match status" value="1"/>
</dbReference>
<dbReference type="PROSITE" id="PS00582">
    <property type="entry name" value="RIBOSOMAL_L33"/>
    <property type="match status" value="1"/>
</dbReference>
<proteinExistence type="inferred from homology"/>
<evidence type="ECO:0000255" key="1">
    <source>
        <dbReference type="HAMAP-Rule" id="MF_00294"/>
    </source>
</evidence>
<evidence type="ECO:0000305" key="2"/>
<accession>A4QCL0</accession>
<reference key="1">
    <citation type="journal article" date="2007" name="Microbiology">
        <title>Comparative analysis of the Corynebacterium glutamicum group and complete genome sequence of strain R.</title>
        <authorList>
            <person name="Yukawa H."/>
            <person name="Omumasaba C.A."/>
            <person name="Nonaka H."/>
            <person name="Kos P."/>
            <person name="Okai N."/>
            <person name="Suzuki N."/>
            <person name="Suda M."/>
            <person name="Tsuge Y."/>
            <person name="Watanabe J."/>
            <person name="Ikeda Y."/>
            <person name="Vertes A.A."/>
            <person name="Inui M."/>
        </authorList>
    </citation>
    <scope>NUCLEOTIDE SEQUENCE [LARGE SCALE GENOMIC DNA]</scope>
    <source>
        <strain>R</strain>
    </source>
</reference>